<protein>
    <recommendedName>
        <fullName evidence="2">Formamidopyrimidine-DNA glycosylase</fullName>
        <shortName evidence="2">Fapy-DNA glycosylase</shortName>
        <ecNumber evidence="2">3.2.2.23</ecNumber>
    </recommendedName>
    <alternativeName>
        <fullName evidence="2">DNA-(apurinic or apyrimidinic site) lyase MutM</fullName>
        <shortName evidence="2">AP lyase MutM</shortName>
        <ecNumber evidence="2">4.2.99.18</ecNumber>
    </alternativeName>
</protein>
<comment type="function">
    <text evidence="2">Involved in base excision repair of DNA damaged by oxidation or by mutagenic agents. Acts as a DNA glycosylase that recognizes and removes damaged bases. Has a preference for oxidized purines, such as 7,8-dihydro-8-oxoguanine (8-oxoG). Has AP (apurinic/apyrimidinic) lyase activity and introduces nicks in the DNA strand. Cleaves the DNA backbone by beta-delta elimination to generate a single-strand break at the site of the removed base with both 3'- and 5'-phosphates.</text>
</comment>
<comment type="catalytic activity">
    <reaction evidence="2">
        <text>Hydrolysis of DNA containing ring-opened 7-methylguanine residues, releasing 2,6-diamino-4-hydroxy-5-(N-methyl)formamidopyrimidine.</text>
        <dbReference type="EC" id="3.2.2.23"/>
    </reaction>
</comment>
<comment type="catalytic activity">
    <reaction evidence="2">
        <text>2'-deoxyribonucleotide-(2'-deoxyribose 5'-phosphate)-2'-deoxyribonucleotide-DNA = a 3'-end 2'-deoxyribonucleotide-(2,3-dehydro-2,3-deoxyribose 5'-phosphate)-DNA + a 5'-end 5'-phospho-2'-deoxyribonucleoside-DNA + H(+)</text>
        <dbReference type="Rhea" id="RHEA:66592"/>
        <dbReference type="Rhea" id="RHEA-COMP:13180"/>
        <dbReference type="Rhea" id="RHEA-COMP:16897"/>
        <dbReference type="Rhea" id="RHEA-COMP:17067"/>
        <dbReference type="ChEBI" id="CHEBI:15378"/>
        <dbReference type="ChEBI" id="CHEBI:136412"/>
        <dbReference type="ChEBI" id="CHEBI:157695"/>
        <dbReference type="ChEBI" id="CHEBI:167181"/>
        <dbReference type="EC" id="4.2.99.18"/>
    </reaction>
</comment>
<comment type="cofactor">
    <cofactor evidence="2">
        <name>Zn(2+)</name>
        <dbReference type="ChEBI" id="CHEBI:29105"/>
    </cofactor>
    <text evidence="2">Binds 1 zinc ion per subunit.</text>
</comment>
<comment type="subunit">
    <text evidence="2">Monomer.</text>
</comment>
<comment type="similarity">
    <text evidence="2">Belongs to the FPG family.</text>
</comment>
<accession>Q0AD66</accession>
<sequence length="271" mass="30439">MPELPEVEVTRRGIDAHLAGRYITQVKIRNYALRWPVSPELITLLPGQRINTITRRAKYLLFACSKGTLIIHLGMSGSLRVLPVSTPSLLHDHFELWLDNEKMLRFRDPRRFGVILWWDGDVRQHPLLQKLGPEPLSDAFNGLFLHEKIQRRSISIKEALMNQHIVVGIGNIYANEALFHAGISPLIAAGSLSTALCARLVDAVKMTLQRAIEAGGSSLRDFTDCDGSPGCFQQQYWVYGRTGQPCRKCGALVSKTRQGQRSSFFCAQCQK</sequence>
<dbReference type="EC" id="3.2.2.23" evidence="2"/>
<dbReference type="EC" id="4.2.99.18" evidence="2"/>
<dbReference type="EMBL" id="CP000450">
    <property type="protein sequence ID" value="ABI60716.1"/>
    <property type="molecule type" value="Genomic_DNA"/>
</dbReference>
<dbReference type="RefSeq" id="WP_011635472.1">
    <property type="nucleotide sequence ID" value="NC_008344.1"/>
</dbReference>
<dbReference type="SMR" id="Q0AD66"/>
<dbReference type="STRING" id="335283.Neut_2512"/>
<dbReference type="KEGG" id="net:Neut_2512"/>
<dbReference type="eggNOG" id="COG0266">
    <property type="taxonomic scope" value="Bacteria"/>
</dbReference>
<dbReference type="HOGENOM" id="CLU_038423_1_1_4"/>
<dbReference type="OrthoDB" id="9800855at2"/>
<dbReference type="Proteomes" id="UP000001966">
    <property type="component" value="Chromosome"/>
</dbReference>
<dbReference type="GO" id="GO:0034039">
    <property type="term" value="F:8-oxo-7,8-dihydroguanine DNA N-glycosylase activity"/>
    <property type="evidence" value="ECO:0007669"/>
    <property type="project" value="TreeGrafter"/>
</dbReference>
<dbReference type="GO" id="GO:0140078">
    <property type="term" value="F:class I DNA-(apurinic or apyrimidinic site) endonuclease activity"/>
    <property type="evidence" value="ECO:0007669"/>
    <property type="project" value="UniProtKB-EC"/>
</dbReference>
<dbReference type="GO" id="GO:0003684">
    <property type="term" value="F:damaged DNA binding"/>
    <property type="evidence" value="ECO:0007669"/>
    <property type="project" value="InterPro"/>
</dbReference>
<dbReference type="GO" id="GO:0008270">
    <property type="term" value="F:zinc ion binding"/>
    <property type="evidence" value="ECO:0007669"/>
    <property type="project" value="UniProtKB-UniRule"/>
</dbReference>
<dbReference type="GO" id="GO:0006284">
    <property type="term" value="P:base-excision repair"/>
    <property type="evidence" value="ECO:0007669"/>
    <property type="project" value="InterPro"/>
</dbReference>
<dbReference type="CDD" id="cd08966">
    <property type="entry name" value="EcFpg-like_N"/>
    <property type="match status" value="1"/>
</dbReference>
<dbReference type="FunFam" id="1.10.8.50:FF:000003">
    <property type="entry name" value="Formamidopyrimidine-DNA glycosylase"/>
    <property type="match status" value="1"/>
</dbReference>
<dbReference type="FunFam" id="3.20.190.10:FF:000001">
    <property type="entry name" value="Formamidopyrimidine-DNA glycosylase"/>
    <property type="match status" value="1"/>
</dbReference>
<dbReference type="Gene3D" id="1.10.8.50">
    <property type="match status" value="1"/>
</dbReference>
<dbReference type="Gene3D" id="3.20.190.10">
    <property type="entry name" value="MutM-like, N-terminal"/>
    <property type="match status" value="1"/>
</dbReference>
<dbReference type="HAMAP" id="MF_00103">
    <property type="entry name" value="Fapy_DNA_glycosyl"/>
    <property type="match status" value="1"/>
</dbReference>
<dbReference type="InterPro" id="IPR015886">
    <property type="entry name" value="DNA_glyclase/AP_lyase_DNA-bd"/>
</dbReference>
<dbReference type="InterPro" id="IPR015887">
    <property type="entry name" value="DNA_glyclase_Znf_dom_DNA_BS"/>
</dbReference>
<dbReference type="InterPro" id="IPR020629">
    <property type="entry name" value="Formamido-pyr_DNA_Glyclase"/>
</dbReference>
<dbReference type="InterPro" id="IPR012319">
    <property type="entry name" value="FPG_cat"/>
</dbReference>
<dbReference type="InterPro" id="IPR035937">
    <property type="entry name" value="MutM-like_N-ter"/>
</dbReference>
<dbReference type="InterPro" id="IPR010979">
    <property type="entry name" value="Ribosomal_uS13-like_H2TH"/>
</dbReference>
<dbReference type="InterPro" id="IPR000214">
    <property type="entry name" value="Znf_DNA_glyclase/AP_lyase"/>
</dbReference>
<dbReference type="InterPro" id="IPR010663">
    <property type="entry name" value="Znf_FPG/IleRS"/>
</dbReference>
<dbReference type="NCBIfam" id="TIGR00577">
    <property type="entry name" value="fpg"/>
    <property type="match status" value="1"/>
</dbReference>
<dbReference type="NCBIfam" id="NF002211">
    <property type="entry name" value="PRK01103.1"/>
    <property type="match status" value="1"/>
</dbReference>
<dbReference type="PANTHER" id="PTHR22993">
    <property type="entry name" value="FORMAMIDOPYRIMIDINE-DNA GLYCOSYLASE"/>
    <property type="match status" value="1"/>
</dbReference>
<dbReference type="PANTHER" id="PTHR22993:SF9">
    <property type="entry name" value="FORMAMIDOPYRIMIDINE-DNA GLYCOSYLASE"/>
    <property type="match status" value="1"/>
</dbReference>
<dbReference type="Pfam" id="PF01149">
    <property type="entry name" value="Fapy_DNA_glyco"/>
    <property type="match status" value="1"/>
</dbReference>
<dbReference type="Pfam" id="PF06831">
    <property type="entry name" value="H2TH"/>
    <property type="match status" value="1"/>
</dbReference>
<dbReference type="Pfam" id="PF06827">
    <property type="entry name" value="zf-FPG_IleRS"/>
    <property type="match status" value="1"/>
</dbReference>
<dbReference type="SMART" id="SM00898">
    <property type="entry name" value="Fapy_DNA_glyco"/>
    <property type="match status" value="1"/>
</dbReference>
<dbReference type="SMART" id="SM01232">
    <property type="entry name" value="H2TH"/>
    <property type="match status" value="1"/>
</dbReference>
<dbReference type="SUPFAM" id="SSF57716">
    <property type="entry name" value="Glucocorticoid receptor-like (DNA-binding domain)"/>
    <property type="match status" value="1"/>
</dbReference>
<dbReference type="SUPFAM" id="SSF81624">
    <property type="entry name" value="N-terminal domain of MutM-like DNA repair proteins"/>
    <property type="match status" value="1"/>
</dbReference>
<dbReference type="SUPFAM" id="SSF46946">
    <property type="entry name" value="S13-like H2TH domain"/>
    <property type="match status" value="1"/>
</dbReference>
<dbReference type="PROSITE" id="PS51068">
    <property type="entry name" value="FPG_CAT"/>
    <property type="match status" value="1"/>
</dbReference>
<dbReference type="PROSITE" id="PS01242">
    <property type="entry name" value="ZF_FPG_1"/>
    <property type="match status" value="1"/>
</dbReference>
<dbReference type="PROSITE" id="PS51066">
    <property type="entry name" value="ZF_FPG_2"/>
    <property type="match status" value="1"/>
</dbReference>
<feature type="initiator methionine" description="Removed" evidence="1">
    <location>
        <position position="1"/>
    </location>
</feature>
<feature type="chain" id="PRO_1000008726" description="Formamidopyrimidine-DNA glycosylase">
    <location>
        <begin position="2"/>
        <end position="271"/>
    </location>
</feature>
<feature type="zinc finger region" description="FPG-type" evidence="2">
    <location>
        <begin position="237"/>
        <end position="271"/>
    </location>
</feature>
<feature type="active site" description="Schiff-base intermediate with DNA" evidence="2">
    <location>
        <position position="2"/>
    </location>
</feature>
<feature type="active site" description="Proton donor" evidence="2">
    <location>
        <position position="3"/>
    </location>
</feature>
<feature type="active site" description="Proton donor; for beta-elimination activity" evidence="2">
    <location>
        <position position="58"/>
    </location>
</feature>
<feature type="active site" description="Proton donor; for delta-elimination activity" evidence="2">
    <location>
        <position position="261"/>
    </location>
</feature>
<feature type="binding site" evidence="2">
    <location>
        <position position="91"/>
    </location>
    <ligand>
        <name>DNA</name>
        <dbReference type="ChEBI" id="CHEBI:16991"/>
    </ligand>
</feature>
<feature type="binding site" evidence="2">
    <location>
        <position position="110"/>
    </location>
    <ligand>
        <name>DNA</name>
        <dbReference type="ChEBI" id="CHEBI:16991"/>
    </ligand>
</feature>
<feature type="binding site" evidence="2">
    <location>
        <position position="152"/>
    </location>
    <ligand>
        <name>DNA</name>
        <dbReference type="ChEBI" id="CHEBI:16991"/>
    </ligand>
</feature>
<organism>
    <name type="scientific">Nitrosomonas eutropha (strain DSM 101675 / C91 / Nm57)</name>
    <dbReference type="NCBI Taxonomy" id="335283"/>
    <lineage>
        <taxon>Bacteria</taxon>
        <taxon>Pseudomonadati</taxon>
        <taxon>Pseudomonadota</taxon>
        <taxon>Betaproteobacteria</taxon>
        <taxon>Nitrosomonadales</taxon>
        <taxon>Nitrosomonadaceae</taxon>
        <taxon>Nitrosomonas</taxon>
    </lineage>
</organism>
<gene>
    <name evidence="2" type="primary">mutM</name>
    <name evidence="2" type="synonym">fpg</name>
    <name type="ordered locus">Neut_2512</name>
</gene>
<name>FPG_NITEC</name>
<reference key="1">
    <citation type="journal article" date="2007" name="Environ. Microbiol.">
        <title>Whole-genome analysis of the ammonia-oxidizing bacterium, Nitrosomonas eutropha C91: implications for niche adaptation.</title>
        <authorList>
            <person name="Stein L.Y."/>
            <person name="Arp D.J."/>
            <person name="Berube P.M."/>
            <person name="Chain P.S."/>
            <person name="Hauser L."/>
            <person name="Jetten M.S."/>
            <person name="Klotz M.G."/>
            <person name="Larimer F.W."/>
            <person name="Norton J.M."/>
            <person name="Op den Camp H.J.M."/>
            <person name="Shin M."/>
            <person name="Wei X."/>
        </authorList>
    </citation>
    <scope>NUCLEOTIDE SEQUENCE [LARGE SCALE GENOMIC DNA]</scope>
    <source>
        <strain>DSM 101675 / C91 / Nm57</strain>
    </source>
</reference>
<evidence type="ECO:0000250" key="1"/>
<evidence type="ECO:0000255" key="2">
    <source>
        <dbReference type="HAMAP-Rule" id="MF_00103"/>
    </source>
</evidence>
<keyword id="KW-0227">DNA damage</keyword>
<keyword id="KW-0234">DNA repair</keyword>
<keyword id="KW-0238">DNA-binding</keyword>
<keyword id="KW-0326">Glycosidase</keyword>
<keyword id="KW-0378">Hydrolase</keyword>
<keyword id="KW-0456">Lyase</keyword>
<keyword id="KW-0479">Metal-binding</keyword>
<keyword id="KW-0511">Multifunctional enzyme</keyword>
<keyword id="KW-0862">Zinc</keyword>
<keyword id="KW-0863">Zinc-finger</keyword>
<proteinExistence type="inferred from homology"/>